<comment type="function">
    <text evidence="1">Forms part of the ribosomal stalk, playing a central role in the interaction of the ribosome with GTP-bound translation factors.</text>
</comment>
<comment type="subunit">
    <text evidence="1">Part of the ribosomal stalk of the 50S ribosomal subunit. The N-terminus interacts with L11 and the large rRNA to form the base of the stalk. The C-terminus forms an elongated spine to which L12 dimers bind in a sequential fashion forming a multimeric L10(L12)X complex.</text>
</comment>
<comment type="similarity">
    <text evidence="1">Belongs to the universal ribosomal protein uL10 family.</text>
</comment>
<keyword id="KW-1185">Reference proteome</keyword>
<keyword id="KW-0687">Ribonucleoprotein</keyword>
<keyword id="KW-0689">Ribosomal protein</keyword>
<keyword id="KW-0694">RNA-binding</keyword>
<keyword id="KW-0699">rRNA-binding</keyword>
<name>RL10_OLEA2</name>
<reference key="1">
    <citation type="journal article" date="2011" name="J. Bacteriol.">
        <title>Complete genome sequence and updated annotation of Desulfovibrio alaskensis G20.</title>
        <authorList>
            <person name="Hauser L.J."/>
            <person name="Land M.L."/>
            <person name="Brown S.D."/>
            <person name="Larimer F."/>
            <person name="Keller K.L."/>
            <person name="Rapp-Giles B.J."/>
            <person name="Price M.N."/>
            <person name="Lin M."/>
            <person name="Bruce D.C."/>
            <person name="Detter J.C."/>
            <person name="Tapia R."/>
            <person name="Han C.S."/>
            <person name="Goodwin L.A."/>
            <person name="Cheng J.F."/>
            <person name="Pitluck S."/>
            <person name="Copeland A."/>
            <person name="Lucas S."/>
            <person name="Nolan M."/>
            <person name="Lapidus A.L."/>
            <person name="Palumbo A.V."/>
            <person name="Wall J.D."/>
        </authorList>
    </citation>
    <scope>NUCLEOTIDE SEQUENCE [LARGE SCALE GENOMIC DNA]</scope>
    <source>
        <strain>ATCC BAA-1058 / DSM 17464 / G20</strain>
    </source>
</reference>
<dbReference type="EMBL" id="CP000112">
    <property type="protein sequence ID" value="ABB39788.1"/>
    <property type="molecule type" value="Genomic_DNA"/>
</dbReference>
<dbReference type="RefSeq" id="WP_011368762.1">
    <property type="nucleotide sequence ID" value="NC_007519.1"/>
</dbReference>
<dbReference type="SMR" id="Q30X08"/>
<dbReference type="STRING" id="207559.Dde_2994"/>
<dbReference type="KEGG" id="dde:Dde_2994"/>
<dbReference type="eggNOG" id="COG0244">
    <property type="taxonomic scope" value="Bacteria"/>
</dbReference>
<dbReference type="HOGENOM" id="CLU_092227_0_0_7"/>
<dbReference type="Proteomes" id="UP000002710">
    <property type="component" value="Chromosome"/>
</dbReference>
<dbReference type="GO" id="GO:1990904">
    <property type="term" value="C:ribonucleoprotein complex"/>
    <property type="evidence" value="ECO:0007669"/>
    <property type="project" value="UniProtKB-KW"/>
</dbReference>
<dbReference type="GO" id="GO:0005840">
    <property type="term" value="C:ribosome"/>
    <property type="evidence" value="ECO:0007669"/>
    <property type="project" value="UniProtKB-KW"/>
</dbReference>
<dbReference type="GO" id="GO:0070180">
    <property type="term" value="F:large ribosomal subunit rRNA binding"/>
    <property type="evidence" value="ECO:0007669"/>
    <property type="project" value="UniProtKB-UniRule"/>
</dbReference>
<dbReference type="GO" id="GO:0006412">
    <property type="term" value="P:translation"/>
    <property type="evidence" value="ECO:0007669"/>
    <property type="project" value="UniProtKB-UniRule"/>
</dbReference>
<dbReference type="CDD" id="cd05797">
    <property type="entry name" value="Ribosomal_L10"/>
    <property type="match status" value="1"/>
</dbReference>
<dbReference type="Gene3D" id="3.30.70.1730">
    <property type="match status" value="1"/>
</dbReference>
<dbReference type="Gene3D" id="6.10.250.290">
    <property type="match status" value="1"/>
</dbReference>
<dbReference type="HAMAP" id="MF_00362">
    <property type="entry name" value="Ribosomal_uL10"/>
    <property type="match status" value="1"/>
</dbReference>
<dbReference type="InterPro" id="IPR001790">
    <property type="entry name" value="Ribosomal_uL10"/>
</dbReference>
<dbReference type="InterPro" id="IPR043141">
    <property type="entry name" value="Ribosomal_uL10-like_sf"/>
</dbReference>
<dbReference type="InterPro" id="IPR022973">
    <property type="entry name" value="Ribosomal_uL10_bac"/>
</dbReference>
<dbReference type="InterPro" id="IPR047865">
    <property type="entry name" value="Ribosomal_uL10_bac_type"/>
</dbReference>
<dbReference type="NCBIfam" id="NF000955">
    <property type="entry name" value="PRK00099.1-1"/>
    <property type="match status" value="1"/>
</dbReference>
<dbReference type="PANTHER" id="PTHR11560">
    <property type="entry name" value="39S RIBOSOMAL PROTEIN L10, MITOCHONDRIAL"/>
    <property type="match status" value="1"/>
</dbReference>
<dbReference type="Pfam" id="PF00466">
    <property type="entry name" value="Ribosomal_L10"/>
    <property type="match status" value="1"/>
</dbReference>
<dbReference type="SUPFAM" id="SSF160369">
    <property type="entry name" value="Ribosomal protein L10-like"/>
    <property type="match status" value="1"/>
</dbReference>
<organism>
    <name type="scientific">Oleidesulfovibrio alaskensis (strain ATCC BAA-1058 / DSM 17464 / G20)</name>
    <name type="common">Desulfovibrio alaskensis</name>
    <dbReference type="NCBI Taxonomy" id="207559"/>
    <lineage>
        <taxon>Bacteria</taxon>
        <taxon>Pseudomonadati</taxon>
        <taxon>Thermodesulfobacteriota</taxon>
        <taxon>Desulfovibrionia</taxon>
        <taxon>Desulfovibrionales</taxon>
        <taxon>Desulfovibrionaceae</taxon>
        <taxon>Oleidesulfovibrio</taxon>
    </lineage>
</organism>
<sequence length="173" mass="18799">MKRSEKAAIIEQLKAKADAAPIAVVTDFKGMPVEELTRLRVKLRESGGDYTVVKNTLARIALTGGTHDVLKDNFSENCGVAFGSEDPVAVAKALVEFRKGSKLFAIRFGSLEGQFLDDKQLDALAKLPGKQELLAKALGTMNAVPTNFVCLFANLLRNFLYALKAIQEQKEAA</sequence>
<proteinExistence type="inferred from homology"/>
<gene>
    <name evidence="1" type="primary">rplJ</name>
    <name type="ordered locus">Dde_2994</name>
</gene>
<accession>Q30X08</accession>
<feature type="chain" id="PRO_0000234849" description="Large ribosomal subunit protein uL10">
    <location>
        <begin position="1"/>
        <end position="173"/>
    </location>
</feature>
<protein>
    <recommendedName>
        <fullName evidence="1">Large ribosomal subunit protein uL10</fullName>
    </recommendedName>
    <alternativeName>
        <fullName evidence="2">50S ribosomal protein L10</fullName>
    </alternativeName>
</protein>
<evidence type="ECO:0000255" key="1">
    <source>
        <dbReference type="HAMAP-Rule" id="MF_00362"/>
    </source>
</evidence>
<evidence type="ECO:0000305" key="2"/>